<protein>
    <recommendedName>
        <fullName evidence="1">Erythronate-4-phosphate dehydrogenase</fullName>
        <ecNumber evidence="1">1.1.1.290</ecNumber>
    </recommendedName>
</protein>
<gene>
    <name evidence="1" type="primary">pdxB</name>
    <name type="ordered locus">ECDH10B_2482</name>
</gene>
<sequence length="378" mass="41368">MKILVDENMPYARDLFSRLGEVTAVPGRPIPVAQLADADALMVRSVTKVNESLLAGKPIKFVGTATAGTDHVDEAWLKQAGIGFSAAPGCNAIAVVEYVFSSLLMLAERDGFSLYDRTVGIVGVGNVGRRLQARLEALGIKTLLCDPPRADRGDEGDFRSLDELVQRADILTFHTPLFKDGPYKTLHLADEKLIRSLKPGAILINACRGAVVDNTALLTCLNEGQKLSVVLDVWEGEPELNVELLKKVDIGTSHIAGYTLEGKARGTTQVFEAYSKFIGHEQHVALDTLLPAPEFGRITLHGPLDQPTLKRLVHLVYDVRRDDAPLRKVAGIPGEFDKLRKNYLERREWSSLYVICDDASAASLLCKLGFNAVHHPAR</sequence>
<organism>
    <name type="scientific">Escherichia coli (strain K12 / DH10B)</name>
    <dbReference type="NCBI Taxonomy" id="316385"/>
    <lineage>
        <taxon>Bacteria</taxon>
        <taxon>Pseudomonadati</taxon>
        <taxon>Pseudomonadota</taxon>
        <taxon>Gammaproteobacteria</taxon>
        <taxon>Enterobacterales</taxon>
        <taxon>Enterobacteriaceae</taxon>
        <taxon>Escherichia</taxon>
    </lineage>
</organism>
<dbReference type="EC" id="1.1.1.290" evidence="1"/>
<dbReference type="EMBL" id="CP000948">
    <property type="protein sequence ID" value="ACB03478.1"/>
    <property type="molecule type" value="Genomic_DNA"/>
</dbReference>
<dbReference type="RefSeq" id="WP_000699148.1">
    <property type="nucleotide sequence ID" value="NC_010473.1"/>
</dbReference>
<dbReference type="SMR" id="B1X931"/>
<dbReference type="KEGG" id="ecd:ECDH10B_2482"/>
<dbReference type="HOGENOM" id="CLU_019796_4_0_6"/>
<dbReference type="UniPathway" id="UPA00244">
    <property type="reaction ID" value="UER00310"/>
</dbReference>
<dbReference type="GO" id="GO:0005829">
    <property type="term" value="C:cytosol"/>
    <property type="evidence" value="ECO:0007669"/>
    <property type="project" value="UniProtKB-ARBA"/>
</dbReference>
<dbReference type="GO" id="GO:0033711">
    <property type="term" value="F:4-phosphoerythronate dehydrogenase activity"/>
    <property type="evidence" value="ECO:0007669"/>
    <property type="project" value="UniProtKB-EC"/>
</dbReference>
<dbReference type="GO" id="GO:0051287">
    <property type="term" value="F:NAD binding"/>
    <property type="evidence" value="ECO:0007669"/>
    <property type="project" value="InterPro"/>
</dbReference>
<dbReference type="GO" id="GO:0046983">
    <property type="term" value="F:protein dimerization activity"/>
    <property type="evidence" value="ECO:0007669"/>
    <property type="project" value="InterPro"/>
</dbReference>
<dbReference type="GO" id="GO:0036001">
    <property type="term" value="P:'de novo' pyridoxal 5'-phosphate biosynthetic process"/>
    <property type="evidence" value="ECO:0007669"/>
    <property type="project" value="TreeGrafter"/>
</dbReference>
<dbReference type="GO" id="GO:0008615">
    <property type="term" value="P:pyridoxine biosynthetic process"/>
    <property type="evidence" value="ECO:0007669"/>
    <property type="project" value="UniProtKB-UniRule"/>
</dbReference>
<dbReference type="CDD" id="cd12158">
    <property type="entry name" value="ErythrP_dh"/>
    <property type="match status" value="1"/>
</dbReference>
<dbReference type="FunFam" id="3.30.1370.170:FF:000001">
    <property type="entry name" value="Erythronate-4-phosphate dehydrogenase"/>
    <property type="match status" value="1"/>
</dbReference>
<dbReference type="FunFam" id="3.40.50.720:FF:000093">
    <property type="entry name" value="Erythronate-4-phosphate dehydrogenase"/>
    <property type="match status" value="1"/>
</dbReference>
<dbReference type="Gene3D" id="3.30.1370.170">
    <property type="match status" value="1"/>
</dbReference>
<dbReference type="Gene3D" id="3.40.50.720">
    <property type="entry name" value="NAD(P)-binding Rossmann-like Domain"/>
    <property type="match status" value="2"/>
</dbReference>
<dbReference type="HAMAP" id="MF_01825">
    <property type="entry name" value="PdxB"/>
    <property type="match status" value="1"/>
</dbReference>
<dbReference type="InterPro" id="IPR006139">
    <property type="entry name" value="D-isomer_2_OHA_DH_cat_dom"/>
</dbReference>
<dbReference type="InterPro" id="IPR029753">
    <property type="entry name" value="D-isomer_DH_CS"/>
</dbReference>
<dbReference type="InterPro" id="IPR029752">
    <property type="entry name" value="D-isomer_DH_CS1"/>
</dbReference>
<dbReference type="InterPro" id="IPR006140">
    <property type="entry name" value="D-isomer_DH_NAD-bd"/>
</dbReference>
<dbReference type="InterPro" id="IPR020921">
    <property type="entry name" value="Erythronate-4-P_DHase"/>
</dbReference>
<dbReference type="InterPro" id="IPR024531">
    <property type="entry name" value="Erythronate-4-P_DHase_dimer"/>
</dbReference>
<dbReference type="InterPro" id="IPR036291">
    <property type="entry name" value="NAD(P)-bd_dom_sf"/>
</dbReference>
<dbReference type="InterPro" id="IPR038251">
    <property type="entry name" value="PdxB_dimer_sf"/>
</dbReference>
<dbReference type="NCBIfam" id="NF001309">
    <property type="entry name" value="PRK00257.1"/>
    <property type="match status" value="1"/>
</dbReference>
<dbReference type="NCBIfam" id="NF011966">
    <property type="entry name" value="PRK15438.1"/>
    <property type="match status" value="1"/>
</dbReference>
<dbReference type="PANTHER" id="PTHR42938">
    <property type="entry name" value="FORMATE DEHYDROGENASE 1"/>
    <property type="match status" value="1"/>
</dbReference>
<dbReference type="PANTHER" id="PTHR42938:SF9">
    <property type="entry name" value="FORMATE DEHYDROGENASE 1"/>
    <property type="match status" value="1"/>
</dbReference>
<dbReference type="Pfam" id="PF00389">
    <property type="entry name" value="2-Hacid_dh"/>
    <property type="match status" value="1"/>
</dbReference>
<dbReference type="Pfam" id="PF02826">
    <property type="entry name" value="2-Hacid_dh_C"/>
    <property type="match status" value="1"/>
</dbReference>
<dbReference type="Pfam" id="PF11890">
    <property type="entry name" value="DUF3410"/>
    <property type="match status" value="1"/>
</dbReference>
<dbReference type="SUPFAM" id="SSF52283">
    <property type="entry name" value="Formate/glycerate dehydrogenase catalytic domain-like"/>
    <property type="match status" value="1"/>
</dbReference>
<dbReference type="SUPFAM" id="SSF51735">
    <property type="entry name" value="NAD(P)-binding Rossmann-fold domains"/>
    <property type="match status" value="1"/>
</dbReference>
<dbReference type="PROSITE" id="PS00065">
    <property type="entry name" value="D_2_HYDROXYACID_DH_1"/>
    <property type="match status" value="1"/>
</dbReference>
<dbReference type="PROSITE" id="PS00671">
    <property type="entry name" value="D_2_HYDROXYACID_DH_3"/>
    <property type="match status" value="1"/>
</dbReference>
<keyword id="KW-0963">Cytoplasm</keyword>
<keyword id="KW-0520">NAD</keyword>
<keyword id="KW-0560">Oxidoreductase</keyword>
<keyword id="KW-0664">Pyridoxine biosynthesis</keyword>
<evidence type="ECO:0000255" key="1">
    <source>
        <dbReference type="HAMAP-Rule" id="MF_01825"/>
    </source>
</evidence>
<feature type="chain" id="PRO_1000188265" description="Erythronate-4-phosphate dehydrogenase">
    <location>
        <begin position="1"/>
        <end position="378"/>
    </location>
</feature>
<feature type="active site" evidence="1">
    <location>
        <position position="208"/>
    </location>
</feature>
<feature type="active site" evidence="1">
    <location>
        <position position="237"/>
    </location>
</feature>
<feature type="active site" description="Proton donor" evidence="1">
    <location>
        <position position="254"/>
    </location>
</feature>
<feature type="binding site" evidence="1">
    <location>
        <position position="45"/>
    </location>
    <ligand>
        <name>substrate</name>
    </ligand>
</feature>
<feature type="binding site" evidence="1">
    <location>
        <position position="66"/>
    </location>
    <ligand>
        <name>substrate</name>
    </ligand>
</feature>
<feature type="binding site" evidence="1">
    <location>
        <position position="146"/>
    </location>
    <ligand>
        <name>NAD(+)</name>
        <dbReference type="ChEBI" id="CHEBI:57540"/>
    </ligand>
</feature>
<feature type="binding site" evidence="1">
    <location>
        <position position="175"/>
    </location>
    <ligand>
        <name>NAD(+)</name>
        <dbReference type="ChEBI" id="CHEBI:57540"/>
    </ligand>
</feature>
<feature type="binding site" evidence="1">
    <location>
        <position position="232"/>
    </location>
    <ligand>
        <name>NAD(+)</name>
        <dbReference type="ChEBI" id="CHEBI:57540"/>
    </ligand>
</feature>
<feature type="binding site" evidence="1">
    <location>
        <position position="257"/>
    </location>
    <ligand>
        <name>NAD(+)</name>
        <dbReference type="ChEBI" id="CHEBI:57540"/>
    </ligand>
</feature>
<feature type="binding site" evidence="1">
    <location>
        <position position="258"/>
    </location>
    <ligand>
        <name>substrate</name>
    </ligand>
</feature>
<reference key="1">
    <citation type="journal article" date="2008" name="J. Bacteriol.">
        <title>The complete genome sequence of Escherichia coli DH10B: insights into the biology of a laboratory workhorse.</title>
        <authorList>
            <person name="Durfee T."/>
            <person name="Nelson R."/>
            <person name="Baldwin S."/>
            <person name="Plunkett G. III"/>
            <person name="Burland V."/>
            <person name="Mau B."/>
            <person name="Petrosino J.F."/>
            <person name="Qin X."/>
            <person name="Muzny D.M."/>
            <person name="Ayele M."/>
            <person name="Gibbs R.A."/>
            <person name="Csorgo B."/>
            <person name="Posfai G."/>
            <person name="Weinstock G.M."/>
            <person name="Blattner F.R."/>
        </authorList>
    </citation>
    <scope>NUCLEOTIDE SEQUENCE [LARGE SCALE GENOMIC DNA]</scope>
    <source>
        <strain>K12 / DH10B</strain>
    </source>
</reference>
<name>PDXB_ECODH</name>
<proteinExistence type="inferred from homology"/>
<comment type="function">
    <text evidence="1">Catalyzes the oxidation of erythronate-4-phosphate to 3-hydroxy-2-oxo-4-phosphonooxybutanoate.</text>
</comment>
<comment type="catalytic activity">
    <reaction evidence="1">
        <text>4-phospho-D-erythronate + NAD(+) = (R)-3-hydroxy-2-oxo-4-phosphooxybutanoate + NADH + H(+)</text>
        <dbReference type="Rhea" id="RHEA:18829"/>
        <dbReference type="ChEBI" id="CHEBI:15378"/>
        <dbReference type="ChEBI" id="CHEBI:57540"/>
        <dbReference type="ChEBI" id="CHEBI:57945"/>
        <dbReference type="ChEBI" id="CHEBI:58538"/>
        <dbReference type="ChEBI" id="CHEBI:58766"/>
        <dbReference type="EC" id="1.1.1.290"/>
    </reaction>
</comment>
<comment type="pathway">
    <text evidence="1">Cofactor biosynthesis; pyridoxine 5'-phosphate biosynthesis; pyridoxine 5'-phosphate from D-erythrose 4-phosphate: step 2/5.</text>
</comment>
<comment type="subunit">
    <text evidence="1">Homodimer.</text>
</comment>
<comment type="subcellular location">
    <subcellularLocation>
        <location evidence="1">Cytoplasm</location>
    </subcellularLocation>
</comment>
<comment type="similarity">
    <text evidence="1">Belongs to the D-isomer specific 2-hydroxyacid dehydrogenase family. PdxB subfamily.</text>
</comment>
<accession>B1X931</accession>